<organism>
    <name type="scientific">Shewanella baltica (strain OS155 / ATCC BAA-1091)</name>
    <dbReference type="NCBI Taxonomy" id="325240"/>
    <lineage>
        <taxon>Bacteria</taxon>
        <taxon>Pseudomonadati</taxon>
        <taxon>Pseudomonadota</taxon>
        <taxon>Gammaproteobacteria</taxon>
        <taxon>Alteromonadales</taxon>
        <taxon>Shewanellaceae</taxon>
        <taxon>Shewanella</taxon>
    </lineage>
</organism>
<keyword id="KW-0963">Cytoplasm</keyword>
<keyword id="KW-0312">Gluconeogenesis</keyword>
<keyword id="KW-0324">Glycolysis</keyword>
<keyword id="KW-0413">Isomerase</keyword>
<keyword id="KW-1185">Reference proteome</keyword>
<reference key="1">
    <citation type="submission" date="2007-02" db="EMBL/GenBank/DDBJ databases">
        <title>Complete sequence of chromosome of Shewanella baltica OS155.</title>
        <authorList>
            <consortium name="US DOE Joint Genome Institute"/>
            <person name="Copeland A."/>
            <person name="Lucas S."/>
            <person name="Lapidus A."/>
            <person name="Barry K."/>
            <person name="Detter J.C."/>
            <person name="Glavina del Rio T."/>
            <person name="Hammon N."/>
            <person name="Israni S."/>
            <person name="Dalin E."/>
            <person name="Tice H."/>
            <person name="Pitluck S."/>
            <person name="Sims D.R."/>
            <person name="Brettin T."/>
            <person name="Bruce D."/>
            <person name="Han C."/>
            <person name="Tapia R."/>
            <person name="Brainard J."/>
            <person name="Schmutz J."/>
            <person name="Larimer F."/>
            <person name="Land M."/>
            <person name="Hauser L."/>
            <person name="Kyrpides N."/>
            <person name="Mikhailova N."/>
            <person name="Brettar I."/>
            <person name="Klappenbach J."/>
            <person name="Konstantinidis K."/>
            <person name="Rodrigues J."/>
            <person name="Tiedje J."/>
            <person name="Richardson P."/>
        </authorList>
    </citation>
    <scope>NUCLEOTIDE SEQUENCE [LARGE SCALE GENOMIC DNA]</scope>
    <source>
        <strain>OS155 / ATCC BAA-1091</strain>
    </source>
</reference>
<name>TPIS_SHEB5</name>
<protein>
    <recommendedName>
        <fullName evidence="1">Triosephosphate isomerase</fullName>
        <shortName evidence="1">TIM</shortName>
        <shortName evidence="1">TPI</shortName>
        <ecNumber evidence="1">5.3.1.1</ecNumber>
    </recommendedName>
    <alternativeName>
        <fullName evidence="1">Triose-phosphate isomerase</fullName>
    </alternativeName>
</protein>
<dbReference type="EC" id="5.3.1.1" evidence="1"/>
<dbReference type="EMBL" id="CP000563">
    <property type="protein sequence ID" value="ABN62723.1"/>
    <property type="molecule type" value="Genomic_DNA"/>
</dbReference>
<dbReference type="RefSeq" id="WP_006082720.1">
    <property type="nucleotide sequence ID" value="NC_009052.1"/>
</dbReference>
<dbReference type="SMR" id="A3D7L0"/>
<dbReference type="STRING" id="325240.Sbal_3243"/>
<dbReference type="GeneID" id="67444453"/>
<dbReference type="KEGG" id="sbl:Sbal_3243"/>
<dbReference type="HOGENOM" id="CLU_024251_2_1_6"/>
<dbReference type="OrthoDB" id="9809429at2"/>
<dbReference type="UniPathway" id="UPA00109">
    <property type="reaction ID" value="UER00189"/>
</dbReference>
<dbReference type="UniPathway" id="UPA00138"/>
<dbReference type="Proteomes" id="UP000001557">
    <property type="component" value="Chromosome"/>
</dbReference>
<dbReference type="GO" id="GO:0005829">
    <property type="term" value="C:cytosol"/>
    <property type="evidence" value="ECO:0007669"/>
    <property type="project" value="TreeGrafter"/>
</dbReference>
<dbReference type="GO" id="GO:0004807">
    <property type="term" value="F:triose-phosphate isomerase activity"/>
    <property type="evidence" value="ECO:0007669"/>
    <property type="project" value="UniProtKB-UniRule"/>
</dbReference>
<dbReference type="GO" id="GO:0006094">
    <property type="term" value="P:gluconeogenesis"/>
    <property type="evidence" value="ECO:0007669"/>
    <property type="project" value="UniProtKB-UniRule"/>
</dbReference>
<dbReference type="GO" id="GO:0046166">
    <property type="term" value="P:glyceraldehyde-3-phosphate biosynthetic process"/>
    <property type="evidence" value="ECO:0007669"/>
    <property type="project" value="TreeGrafter"/>
</dbReference>
<dbReference type="GO" id="GO:0019563">
    <property type="term" value="P:glycerol catabolic process"/>
    <property type="evidence" value="ECO:0007669"/>
    <property type="project" value="TreeGrafter"/>
</dbReference>
<dbReference type="GO" id="GO:0006096">
    <property type="term" value="P:glycolytic process"/>
    <property type="evidence" value="ECO:0007669"/>
    <property type="project" value="UniProtKB-UniRule"/>
</dbReference>
<dbReference type="CDD" id="cd00311">
    <property type="entry name" value="TIM"/>
    <property type="match status" value="1"/>
</dbReference>
<dbReference type="FunFam" id="3.20.20.70:FF:000016">
    <property type="entry name" value="Triosephosphate isomerase"/>
    <property type="match status" value="1"/>
</dbReference>
<dbReference type="Gene3D" id="3.20.20.70">
    <property type="entry name" value="Aldolase class I"/>
    <property type="match status" value="1"/>
</dbReference>
<dbReference type="HAMAP" id="MF_00147_B">
    <property type="entry name" value="TIM_B"/>
    <property type="match status" value="1"/>
</dbReference>
<dbReference type="InterPro" id="IPR013785">
    <property type="entry name" value="Aldolase_TIM"/>
</dbReference>
<dbReference type="InterPro" id="IPR035990">
    <property type="entry name" value="TIM_sf"/>
</dbReference>
<dbReference type="InterPro" id="IPR022896">
    <property type="entry name" value="TrioseP_Isoase_bac/euk"/>
</dbReference>
<dbReference type="InterPro" id="IPR000652">
    <property type="entry name" value="Triosephosphate_isomerase"/>
</dbReference>
<dbReference type="InterPro" id="IPR020861">
    <property type="entry name" value="Triosephosphate_isomerase_AS"/>
</dbReference>
<dbReference type="NCBIfam" id="TIGR00419">
    <property type="entry name" value="tim"/>
    <property type="match status" value="1"/>
</dbReference>
<dbReference type="PANTHER" id="PTHR21139">
    <property type="entry name" value="TRIOSEPHOSPHATE ISOMERASE"/>
    <property type="match status" value="1"/>
</dbReference>
<dbReference type="PANTHER" id="PTHR21139:SF42">
    <property type="entry name" value="TRIOSEPHOSPHATE ISOMERASE"/>
    <property type="match status" value="1"/>
</dbReference>
<dbReference type="Pfam" id="PF00121">
    <property type="entry name" value="TIM"/>
    <property type="match status" value="1"/>
</dbReference>
<dbReference type="SUPFAM" id="SSF51351">
    <property type="entry name" value="Triosephosphate isomerase (TIM)"/>
    <property type="match status" value="1"/>
</dbReference>
<dbReference type="PROSITE" id="PS00171">
    <property type="entry name" value="TIM_1"/>
    <property type="match status" value="1"/>
</dbReference>
<dbReference type="PROSITE" id="PS51440">
    <property type="entry name" value="TIM_2"/>
    <property type="match status" value="1"/>
</dbReference>
<gene>
    <name evidence="1" type="primary">tpiA</name>
    <name type="ordered locus">Sbal_3243</name>
</gene>
<accession>A3D7L0</accession>
<feature type="chain" id="PRO_1000009855" description="Triosephosphate isomerase">
    <location>
        <begin position="1"/>
        <end position="260"/>
    </location>
</feature>
<feature type="active site" description="Electrophile" evidence="1">
    <location>
        <position position="103"/>
    </location>
</feature>
<feature type="active site" description="Proton acceptor" evidence="1">
    <location>
        <position position="175"/>
    </location>
</feature>
<feature type="binding site" evidence="1">
    <location>
        <begin position="11"/>
        <end position="13"/>
    </location>
    <ligand>
        <name>substrate</name>
    </ligand>
</feature>
<feature type="binding site" evidence="1">
    <location>
        <position position="181"/>
    </location>
    <ligand>
        <name>substrate</name>
    </ligand>
</feature>
<feature type="binding site" evidence="1">
    <location>
        <position position="220"/>
    </location>
    <ligand>
        <name>substrate</name>
    </ligand>
</feature>
<feature type="binding site" evidence="1">
    <location>
        <begin position="241"/>
        <end position="242"/>
    </location>
    <ligand>
        <name>substrate</name>
    </ligand>
</feature>
<evidence type="ECO:0000255" key="1">
    <source>
        <dbReference type="HAMAP-Rule" id="MF_00147"/>
    </source>
</evidence>
<proteinExistence type="inferred from homology"/>
<comment type="function">
    <text evidence="1">Involved in the gluconeogenesis. Catalyzes stereospecifically the conversion of dihydroxyacetone phosphate (DHAP) to D-glyceraldehyde-3-phosphate (G3P).</text>
</comment>
<comment type="catalytic activity">
    <reaction evidence="1">
        <text>D-glyceraldehyde 3-phosphate = dihydroxyacetone phosphate</text>
        <dbReference type="Rhea" id="RHEA:18585"/>
        <dbReference type="ChEBI" id="CHEBI:57642"/>
        <dbReference type="ChEBI" id="CHEBI:59776"/>
        <dbReference type="EC" id="5.3.1.1"/>
    </reaction>
</comment>
<comment type="pathway">
    <text evidence="1">Carbohydrate biosynthesis; gluconeogenesis.</text>
</comment>
<comment type="pathway">
    <text evidence="1">Carbohydrate degradation; glycolysis; D-glyceraldehyde 3-phosphate from glycerone phosphate: step 1/1.</text>
</comment>
<comment type="subunit">
    <text evidence="1">Homodimer.</text>
</comment>
<comment type="subcellular location">
    <subcellularLocation>
        <location evidence="1">Cytoplasm</location>
    </subcellularLocation>
</comment>
<comment type="similarity">
    <text evidence="1">Belongs to the triosephosphate isomerase family.</text>
</comment>
<sequence length="260" mass="28043">MALRRPMVAGNWKMNGSAALAQELFKKFASKLQNDSAEVVLCPPSIYLESVRQLLEANKEALDGSLVRMGAQNLSQHDFGAYTGEVSGQMLKDSGCRYVIIGHSERRRMYGETSNIVAEKFAAAQKHGLTPILCVGESGPAREARRTFEVIAEELDIVIQKNGTMAFDNAIIAYEPLWAVGTGKSATPEQAQEVHAFIRKRLSEVSPFIGENIRILYGGSVTPSNAADLFAQPDVDGGLIGGASLNSSEFLSLCTIAMSA</sequence>